<protein>
    <recommendedName>
        <fullName evidence="3">Putative D-galactosamine-6-phosphate deaminase AgaS</fullName>
        <ecNumber evidence="1">3.5.99.-</ecNumber>
    </recommendedName>
    <alternativeName>
        <fullName evidence="1">Gam-6-P deaminase/isomerase</fullName>
    </alternativeName>
</protein>
<comment type="function">
    <text evidence="1">Catalyzes the isomerization-deamination of galactosamine 6-phosphate to form tagatofuranose 6-phosphate and ammonium ion.</text>
</comment>
<comment type="catalytic activity">
    <reaction evidence="1">
        <text>D-galactosamine 6-phosphate + H2O = D-tagatopyranose 1-phosphate + NH4(+)</text>
        <dbReference type="Rhea" id="RHEA:47680"/>
        <dbReference type="ChEBI" id="CHEBI:15377"/>
        <dbReference type="ChEBI" id="CHEBI:28938"/>
        <dbReference type="ChEBI" id="CHEBI:71674"/>
        <dbReference type="ChEBI" id="CHEBI:138150"/>
    </reaction>
</comment>
<comment type="miscellaneous">
    <text>In contrast to E.coli strains C and EC3132, K-12 strains cannot grow on N-acetylgalactosamine and D-galactosamine, because they carry a deletion and thus lack active PTS systems specific for these compounds. Therefore, AgaS in K-12 strains is not involved in the degradation of these compounds.</text>
</comment>
<comment type="similarity">
    <text evidence="3">Belongs to the SIS family. AgaS subfamily.</text>
</comment>
<evidence type="ECO:0000250" key="1">
    <source>
        <dbReference type="UniProtKB" id="Q9KIP9"/>
    </source>
</evidence>
<evidence type="ECO:0000255" key="2">
    <source>
        <dbReference type="PROSITE-ProRule" id="PRU00797"/>
    </source>
</evidence>
<evidence type="ECO:0000305" key="3"/>
<evidence type="ECO:0007829" key="4">
    <source>
        <dbReference type="PDB" id="3C3J"/>
    </source>
</evidence>
<proteinExistence type="evidence at protein level"/>
<gene>
    <name type="primary">agaS</name>
    <name type="synonym">yraB</name>
    <name type="ordered locus">b3136</name>
    <name type="ordered locus">JW3105</name>
</gene>
<feature type="chain" id="PRO_0000136590" description="Putative D-galactosamine-6-phosphate deaminase AgaS">
    <location>
        <begin position="1"/>
        <end position="384"/>
    </location>
</feature>
<feature type="domain" description="SIS 1" evidence="2">
    <location>
        <begin position="45"/>
        <end position="197"/>
    </location>
</feature>
<feature type="domain" description="SIS 2" evidence="2">
    <location>
        <begin position="215"/>
        <end position="364"/>
    </location>
</feature>
<feature type="helix" evidence="4">
    <location>
        <begin position="15"/>
        <end position="21"/>
    </location>
</feature>
<feature type="helix" evidence="4">
    <location>
        <begin position="23"/>
        <end position="49"/>
    </location>
</feature>
<feature type="strand" evidence="4">
    <location>
        <begin position="55"/>
        <end position="59"/>
    </location>
</feature>
<feature type="helix" evidence="4">
    <location>
        <begin position="63"/>
        <end position="79"/>
    </location>
</feature>
<feature type="strand" evidence="4">
    <location>
        <begin position="81"/>
        <end position="85"/>
    </location>
</feature>
<feature type="helix" evidence="4">
    <location>
        <begin position="88"/>
        <end position="93"/>
    </location>
</feature>
<feature type="helix" evidence="4">
    <location>
        <begin position="95"/>
        <end position="98"/>
    </location>
</feature>
<feature type="strand" evidence="4">
    <location>
        <begin position="105"/>
        <end position="114"/>
    </location>
</feature>
<feature type="helix" evidence="4">
    <location>
        <begin position="117"/>
        <end position="129"/>
    </location>
</feature>
<feature type="strand" evidence="4">
    <location>
        <begin position="131"/>
        <end position="140"/>
    </location>
</feature>
<feature type="helix" evidence="4">
    <location>
        <begin position="145"/>
        <end position="151"/>
    </location>
</feature>
<feature type="helix" evidence="4">
    <location>
        <begin position="163"/>
        <end position="165"/>
    </location>
</feature>
<feature type="strand" evidence="4">
    <location>
        <begin position="169"/>
        <end position="171"/>
    </location>
</feature>
<feature type="helix" evidence="4">
    <location>
        <begin position="174"/>
        <end position="187"/>
    </location>
</feature>
<feature type="turn" evidence="4">
    <location>
        <begin position="189"/>
        <end position="191"/>
    </location>
</feature>
<feature type="turn" evidence="4">
    <location>
        <begin position="194"/>
        <end position="197"/>
    </location>
</feature>
<feature type="helix" evidence="4">
    <location>
        <begin position="198"/>
        <end position="210"/>
    </location>
</feature>
<feature type="turn" evidence="4">
    <location>
        <begin position="211"/>
        <end position="213"/>
    </location>
</feature>
<feature type="strand" evidence="4">
    <location>
        <begin position="225"/>
        <end position="232"/>
    </location>
</feature>
<feature type="helix" evidence="4">
    <location>
        <begin position="235"/>
        <end position="249"/>
    </location>
</feature>
<feature type="turn" evidence="4">
    <location>
        <begin position="250"/>
        <end position="252"/>
    </location>
</feature>
<feature type="strand" evidence="4">
    <location>
        <begin position="253"/>
        <end position="259"/>
    </location>
</feature>
<feature type="helix" evidence="4">
    <location>
        <begin position="261"/>
        <end position="264"/>
    </location>
</feature>
<feature type="turn" evidence="4">
    <location>
        <begin position="265"/>
        <end position="267"/>
    </location>
</feature>
<feature type="helix" evidence="4">
    <location>
        <begin position="268"/>
        <end position="271"/>
    </location>
</feature>
<feature type="strand" evidence="4">
    <location>
        <begin position="276"/>
        <end position="281"/>
    </location>
</feature>
<feature type="helix" evidence="4">
    <location>
        <begin position="288"/>
        <end position="302"/>
    </location>
</feature>
<feature type="strand" evidence="4">
    <location>
        <begin position="305"/>
        <end position="314"/>
    </location>
</feature>
<feature type="helix" evidence="4">
    <location>
        <begin position="317"/>
        <end position="320"/>
    </location>
</feature>
<feature type="strand" evidence="4">
    <location>
        <begin position="322"/>
        <end position="326"/>
    </location>
</feature>
<feature type="helix" evidence="4">
    <location>
        <begin position="335"/>
        <end position="356"/>
    </location>
</feature>
<keyword id="KW-0002">3D-structure</keyword>
<keyword id="KW-0378">Hydrolase</keyword>
<keyword id="KW-1185">Reference proteome</keyword>
<keyword id="KW-0677">Repeat</keyword>
<sequence>MPENYTPAAAATGTWTEEEIRHQPRAWIRSLTNIDALRSALNNFLEPLLRKENLRIILTGAGTSAFIGDIIAPWLASHTGKNFSAVPTTDLVTNPMDYLNPAHPLLLISFGRSGNSPESVAAVELANQFVPECYHLPITCNEAGALYQNAINSDNAFALLMPAETHDRGFAMTSSITTMMASCLAVFAPETINSQTFRDVADRCQAILTSLGDFSEGVFGYAPWKRIVYLGSGGLQGAARESALKVLELTAGKLAAFYDSPTGFRHGPKSLVDDETLVVVFVSSHPYTRQYDLDLLAELRRDNQAMRVIAIAAESSDIVAAGPHIILPPSRHFIDVEQAFCFLMYAQTFALMQSLHMGNTPDTPSASGTVNRVVQGVIIHPWQA</sequence>
<name>AGAS_ECOLI</name>
<organism>
    <name type="scientific">Escherichia coli (strain K12)</name>
    <dbReference type="NCBI Taxonomy" id="83333"/>
    <lineage>
        <taxon>Bacteria</taxon>
        <taxon>Pseudomonadati</taxon>
        <taxon>Pseudomonadota</taxon>
        <taxon>Gammaproteobacteria</taxon>
        <taxon>Enterobacterales</taxon>
        <taxon>Enterobacteriaceae</taxon>
        <taxon>Escherichia</taxon>
    </lineage>
</organism>
<dbReference type="EC" id="3.5.99.-" evidence="1"/>
<dbReference type="EMBL" id="U18997">
    <property type="protein sequence ID" value="AAA57939.1"/>
    <property type="molecule type" value="Genomic_DNA"/>
</dbReference>
<dbReference type="EMBL" id="U00096">
    <property type="protein sequence ID" value="AAC76170.1"/>
    <property type="molecule type" value="Genomic_DNA"/>
</dbReference>
<dbReference type="EMBL" id="AP009048">
    <property type="protein sequence ID" value="BAE77182.1"/>
    <property type="molecule type" value="Genomic_DNA"/>
</dbReference>
<dbReference type="PIR" id="D65103">
    <property type="entry name" value="D65103"/>
</dbReference>
<dbReference type="RefSeq" id="NP_417605.1">
    <property type="nucleotide sequence ID" value="NC_000913.3"/>
</dbReference>
<dbReference type="RefSeq" id="WP_001114869.1">
    <property type="nucleotide sequence ID" value="NZ_LN832404.1"/>
</dbReference>
<dbReference type="PDB" id="3C3J">
    <property type="method" value="X-ray"/>
    <property type="resolution" value="1.80 A"/>
    <property type="chains" value="A/B/C/D/E/F=1-384"/>
</dbReference>
<dbReference type="PDBsum" id="3C3J"/>
<dbReference type="SMR" id="P42907"/>
<dbReference type="BioGRID" id="4261158">
    <property type="interactions" value="784"/>
</dbReference>
<dbReference type="FunCoup" id="P42907">
    <property type="interactions" value="156"/>
</dbReference>
<dbReference type="IntAct" id="P42907">
    <property type="interactions" value="5"/>
</dbReference>
<dbReference type="STRING" id="511145.b3136"/>
<dbReference type="PaxDb" id="511145-b3136"/>
<dbReference type="DNASU" id="947645"/>
<dbReference type="EnsemblBacteria" id="AAC76170">
    <property type="protein sequence ID" value="AAC76170"/>
    <property type="gene ID" value="b3136"/>
</dbReference>
<dbReference type="GeneID" id="947645"/>
<dbReference type="KEGG" id="ecj:JW3105"/>
<dbReference type="KEGG" id="eco:b3136"/>
<dbReference type="KEGG" id="ecoc:C3026_17090"/>
<dbReference type="PATRIC" id="fig|1411691.4.peg.3594"/>
<dbReference type="EchoBASE" id="EB2620"/>
<dbReference type="eggNOG" id="COG2222">
    <property type="taxonomic scope" value="Bacteria"/>
</dbReference>
<dbReference type="HOGENOM" id="CLU_012520_0_0_6"/>
<dbReference type="InParanoid" id="P42907"/>
<dbReference type="OMA" id="KQQPELW"/>
<dbReference type="OrthoDB" id="9779207at2"/>
<dbReference type="PhylomeDB" id="P42907"/>
<dbReference type="BioCyc" id="EcoCyc:G7634-MONOMER"/>
<dbReference type="EvolutionaryTrace" id="P42907"/>
<dbReference type="PRO" id="PR:P42907"/>
<dbReference type="Proteomes" id="UP000000625">
    <property type="component" value="Chromosome"/>
</dbReference>
<dbReference type="GO" id="GO:0005886">
    <property type="term" value="C:plasma membrane"/>
    <property type="evidence" value="ECO:0000318"/>
    <property type="project" value="GO_Central"/>
</dbReference>
<dbReference type="GO" id="GO:0097367">
    <property type="term" value="F:carbohydrate derivative binding"/>
    <property type="evidence" value="ECO:0007669"/>
    <property type="project" value="InterPro"/>
</dbReference>
<dbReference type="GO" id="GO:0016787">
    <property type="term" value="F:hydrolase activity"/>
    <property type="evidence" value="ECO:0007669"/>
    <property type="project" value="UniProtKB-KW"/>
</dbReference>
<dbReference type="GO" id="GO:0016853">
    <property type="term" value="F:isomerase activity"/>
    <property type="evidence" value="ECO:0007669"/>
    <property type="project" value="InterPro"/>
</dbReference>
<dbReference type="GO" id="GO:1901135">
    <property type="term" value="P:carbohydrate derivative metabolic process"/>
    <property type="evidence" value="ECO:0007669"/>
    <property type="project" value="InterPro"/>
</dbReference>
<dbReference type="GO" id="GO:0009401">
    <property type="term" value="P:phosphoenolpyruvate-dependent sugar phosphotransferase system"/>
    <property type="evidence" value="ECO:0000318"/>
    <property type="project" value="GO_Central"/>
</dbReference>
<dbReference type="CDD" id="cd05010">
    <property type="entry name" value="SIS_AgaS_like"/>
    <property type="match status" value="1"/>
</dbReference>
<dbReference type="CDD" id="cd05008">
    <property type="entry name" value="SIS_GlmS_GlmD_1"/>
    <property type="match status" value="1"/>
</dbReference>
<dbReference type="Gene3D" id="3.40.50.10490">
    <property type="entry name" value="Glucose-6-phosphate isomerase like protein, domain 1"/>
    <property type="match status" value="2"/>
</dbReference>
<dbReference type="InterPro" id="IPR050303">
    <property type="entry name" value="GatZ_KbaZ_carbometab"/>
</dbReference>
<dbReference type="InterPro" id="IPR035466">
    <property type="entry name" value="GlmS/AgaS_SIS"/>
</dbReference>
<dbReference type="InterPro" id="IPR035464">
    <property type="entry name" value="SIS_AgaS"/>
</dbReference>
<dbReference type="InterPro" id="IPR001347">
    <property type="entry name" value="SIS_dom"/>
</dbReference>
<dbReference type="InterPro" id="IPR046348">
    <property type="entry name" value="SIS_dom_sf"/>
</dbReference>
<dbReference type="InterPro" id="IPR014180">
    <property type="entry name" value="Sugar_isomerase_AgaS"/>
</dbReference>
<dbReference type="NCBIfam" id="TIGR02815">
    <property type="entry name" value="agaS_fam"/>
    <property type="match status" value="1"/>
</dbReference>
<dbReference type="PANTHER" id="PTHR32502:SF3">
    <property type="entry name" value="D-GALACTOSAMINE-6-PHOSPHATE DEAMINASE AGAS-RELATED"/>
    <property type="match status" value="1"/>
</dbReference>
<dbReference type="PANTHER" id="PTHR32502">
    <property type="entry name" value="N-ACETYLGALACTOSAMINE PERMEASE II COMPONENT-RELATED"/>
    <property type="match status" value="1"/>
</dbReference>
<dbReference type="Pfam" id="PF01380">
    <property type="entry name" value="SIS"/>
    <property type="match status" value="2"/>
</dbReference>
<dbReference type="SUPFAM" id="SSF53697">
    <property type="entry name" value="SIS domain"/>
    <property type="match status" value="1"/>
</dbReference>
<dbReference type="PROSITE" id="PS51464">
    <property type="entry name" value="SIS"/>
    <property type="match status" value="2"/>
</dbReference>
<reference key="1">
    <citation type="journal article" date="1997" name="Science">
        <title>The complete genome sequence of Escherichia coli K-12.</title>
        <authorList>
            <person name="Blattner F.R."/>
            <person name="Plunkett G. III"/>
            <person name="Bloch C.A."/>
            <person name="Perna N.T."/>
            <person name="Burland V."/>
            <person name="Riley M."/>
            <person name="Collado-Vides J."/>
            <person name="Glasner J.D."/>
            <person name="Rode C.K."/>
            <person name="Mayhew G.F."/>
            <person name="Gregor J."/>
            <person name="Davis N.W."/>
            <person name="Kirkpatrick H.A."/>
            <person name="Goeden M.A."/>
            <person name="Rose D.J."/>
            <person name="Mau B."/>
            <person name="Shao Y."/>
        </authorList>
    </citation>
    <scope>NUCLEOTIDE SEQUENCE [LARGE SCALE GENOMIC DNA]</scope>
    <source>
        <strain>K12 / MG1655 / ATCC 47076</strain>
    </source>
</reference>
<reference key="2">
    <citation type="journal article" date="2006" name="Mol. Syst. Biol.">
        <title>Highly accurate genome sequences of Escherichia coli K-12 strains MG1655 and W3110.</title>
        <authorList>
            <person name="Hayashi K."/>
            <person name="Morooka N."/>
            <person name="Yamamoto Y."/>
            <person name="Fujita K."/>
            <person name="Isono K."/>
            <person name="Choi S."/>
            <person name="Ohtsubo E."/>
            <person name="Baba T."/>
            <person name="Wanner B.L."/>
            <person name="Mori H."/>
            <person name="Horiuchi T."/>
        </authorList>
    </citation>
    <scope>NUCLEOTIDE SEQUENCE [LARGE SCALE GENOMIC DNA]</scope>
    <source>
        <strain>K12 / W3110 / ATCC 27325 / DSM 5911</strain>
    </source>
</reference>
<reference key="3">
    <citation type="journal article" date="1996" name="Microbiology">
        <title>Novel phosphotransferase genes revealed by bacterial genome sequencing: a gene cluster encoding a putative N-acetylgalactosamine metabolic pathway in Escherichia coli.</title>
        <authorList>
            <person name="Reizer J."/>
            <person name="Ramseier T.M."/>
            <person name="Reizer A."/>
            <person name="Charbit A."/>
            <person name="Saier M.H. Jr."/>
        </authorList>
    </citation>
    <scope>DISCUSSION OF SEQUENCE</scope>
</reference>
<reference key="4">
    <citation type="submission" date="2008-02" db="PDB data bank">
        <title>The crystal structure of the tagatose-6-phosphate ketose/aldose isomerase from Escherichia coli.</title>
        <authorList>
            <consortium name="Midwest center for structural genomics (MCSG)"/>
        </authorList>
    </citation>
    <scope>X-RAY CRYSTALLOGRAPHY (1.8 ANGSTROMS)</scope>
</reference>
<accession>P42907</accession>
<accession>Q2M974</accession>